<sequence length="514" mass="56133">MQNLPKWKIFLSIICTIFAVICALPNFTQVKSKYLPHDSVNLGLDLRGGAHLLLDVDFDTYLNDTMENLADTLRKSFREDKIGYKNLLVKQNNIQLELRSQEELKPLKRIISKIDPEINVEANDNRIKLSYSESRLSELLNKVVDQSIEIVRMRVDSTGTKEPILQKQGDRHILLQVPGEEDPTYLKNILGKTAKLIFHLVDENANVEEAVKGHVPMGSMLVQGDRMGYLVVKKKAILGGDSLTTAAASFDQNSQAVVSFSFNSLGSKLFGEVTKNNVGKHLAIVLDNKLLSAPTINQPIMGGSGIISGDFTVESANELALLLRAGSLPAPLKIIEERSIGPNLGADSIESGKKAGIIGFAAVCIFMVWSYGLLGLFANIALSLAMLYVLALLSLFQATLTLPGIAGIILTMGMAVDANVLIYERIKEELNKGTSNLYAIKTGFESAFATILDSNLTTLIVAFLLYIFGVGAIKGFAVALTIGIISSMFSAIIITKLLIDIWVKYFKPKKLGLV</sequence>
<organism>
    <name type="scientific">Rickettsia bellii (strain RML369-C)</name>
    <dbReference type="NCBI Taxonomy" id="336407"/>
    <lineage>
        <taxon>Bacteria</taxon>
        <taxon>Pseudomonadati</taxon>
        <taxon>Pseudomonadota</taxon>
        <taxon>Alphaproteobacteria</taxon>
        <taxon>Rickettsiales</taxon>
        <taxon>Rickettsiaceae</taxon>
        <taxon>Rickettsieae</taxon>
        <taxon>Rickettsia</taxon>
        <taxon>belli group</taxon>
    </lineage>
</organism>
<proteinExistence type="inferred from homology"/>
<accession>Q1RIN3</accession>
<feature type="chain" id="PRO_0000272633" description="Protein translocase subunit SecD">
    <location>
        <begin position="1"/>
        <end position="514"/>
    </location>
</feature>
<feature type="transmembrane region" description="Helical" evidence="1">
    <location>
        <begin position="7"/>
        <end position="27"/>
    </location>
</feature>
<feature type="transmembrane region" description="Helical" evidence="1">
    <location>
        <begin position="357"/>
        <end position="377"/>
    </location>
</feature>
<feature type="transmembrane region" description="Helical" evidence="1">
    <location>
        <begin position="389"/>
        <end position="409"/>
    </location>
</feature>
<feature type="transmembrane region" description="Helical" evidence="1">
    <location>
        <begin position="448"/>
        <end position="470"/>
    </location>
</feature>
<feature type="transmembrane region" description="Helical" evidence="1">
    <location>
        <begin position="482"/>
        <end position="502"/>
    </location>
</feature>
<dbReference type="EMBL" id="CP000087">
    <property type="protein sequence ID" value="ABE04781.1"/>
    <property type="molecule type" value="Genomic_DNA"/>
</dbReference>
<dbReference type="RefSeq" id="WP_011477368.1">
    <property type="nucleotide sequence ID" value="NC_007940.1"/>
</dbReference>
<dbReference type="SMR" id="Q1RIN3"/>
<dbReference type="KEGG" id="rbe:RBE_0700"/>
<dbReference type="eggNOG" id="COG0342">
    <property type="taxonomic scope" value="Bacteria"/>
</dbReference>
<dbReference type="HOGENOM" id="CLU_007894_4_3_5"/>
<dbReference type="OrthoDB" id="9805019at2"/>
<dbReference type="Proteomes" id="UP000001951">
    <property type="component" value="Chromosome"/>
</dbReference>
<dbReference type="GO" id="GO:0005886">
    <property type="term" value="C:plasma membrane"/>
    <property type="evidence" value="ECO:0007669"/>
    <property type="project" value="UniProtKB-SubCell"/>
</dbReference>
<dbReference type="GO" id="GO:0015450">
    <property type="term" value="F:protein-transporting ATPase activity"/>
    <property type="evidence" value="ECO:0007669"/>
    <property type="project" value="InterPro"/>
</dbReference>
<dbReference type="GO" id="GO:0065002">
    <property type="term" value="P:intracellular protein transmembrane transport"/>
    <property type="evidence" value="ECO:0007669"/>
    <property type="project" value="UniProtKB-UniRule"/>
</dbReference>
<dbReference type="GO" id="GO:0006605">
    <property type="term" value="P:protein targeting"/>
    <property type="evidence" value="ECO:0007669"/>
    <property type="project" value="UniProtKB-UniRule"/>
</dbReference>
<dbReference type="GO" id="GO:0043952">
    <property type="term" value="P:protein transport by the Sec complex"/>
    <property type="evidence" value="ECO:0007669"/>
    <property type="project" value="UniProtKB-UniRule"/>
</dbReference>
<dbReference type="FunFam" id="3.30.1360.200:FF:000002">
    <property type="entry name" value="Preprotein translocase subunit SecD"/>
    <property type="match status" value="1"/>
</dbReference>
<dbReference type="FunFam" id="1.20.1640.10:FF:000004">
    <property type="entry name" value="Protein translocase subunit SecD"/>
    <property type="match status" value="1"/>
</dbReference>
<dbReference type="Gene3D" id="3.30.1360.200">
    <property type="match status" value="1"/>
</dbReference>
<dbReference type="Gene3D" id="3.30.70.3400">
    <property type="match status" value="2"/>
</dbReference>
<dbReference type="Gene3D" id="1.20.1640.10">
    <property type="entry name" value="Multidrug efflux transporter AcrB transmembrane domain"/>
    <property type="match status" value="1"/>
</dbReference>
<dbReference type="HAMAP" id="MF_01463_B">
    <property type="entry name" value="SecD_B"/>
    <property type="match status" value="1"/>
</dbReference>
<dbReference type="InterPro" id="IPR001036">
    <property type="entry name" value="Acrflvin-R"/>
</dbReference>
<dbReference type="InterPro" id="IPR005791">
    <property type="entry name" value="SecD"/>
</dbReference>
<dbReference type="InterPro" id="IPR022813">
    <property type="entry name" value="SecD/SecF_arch_bac"/>
</dbReference>
<dbReference type="InterPro" id="IPR048631">
    <property type="entry name" value="SecD_1st"/>
</dbReference>
<dbReference type="InterPro" id="IPR048634">
    <property type="entry name" value="SecD_SecF_C"/>
</dbReference>
<dbReference type="InterPro" id="IPR055344">
    <property type="entry name" value="SecD_SecF_C_bact"/>
</dbReference>
<dbReference type="InterPro" id="IPR054384">
    <property type="entry name" value="SecDF_P1_head"/>
</dbReference>
<dbReference type="NCBIfam" id="TIGR00916">
    <property type="entry name" value="2A0604s01"/>
    <property type="match status" value="1"/>
</dbReference>
<dbReference type="NCBIfam" id="TIGR01129">
    <property type="entry name" value="secD"/>
    <property type="match status" value="1"/>
</dbReference>
<dbReference type="PANTHER" id="PTHR30081:SF1">
    <property type="entry name" value="PROTEIN TRANSLOCASE SUBUNIT SECD"/>
    <property type="match status" value="1"/>
</dbReference>
<dbReference type="PANTHER" id="PTHR30081">
    <property type="entry name" value="PROTEIN-EXPORT MEMBRANE PROTEIN SEC"/>
    <property type="match status" value="1"/>
</dbReference>
<dbReference type="Pfam" id="PF21760">
    <property type="entry name" value="SecD_1st"/>
    <property type="match status" value="1"/>
</dbReference>
<dbReference type="Pfam" id="PF02355">
    <property type="entry name" value="SecD_SecF_C"/>
    <property type="match status" value="1"/>
</dbReference>
<dbReference type="Pfam" id="PF22599">
    <property type="entry name" value="SecDF_P1_head"/>
    <property type="match status" value="1"/>
</dbReference>
<dbReference type="PRINTS" id="PR00702">
    <property type="entry name" value="ACRIFLAVINRP"/>
</dbReference>
<dbReference type="SUPFAM" id="SSF82866">
    <property type="entry name" value="Multidrug efflux transporter AcrB transmembrane domain"/>
    <property type="match status" value="1"/>
</dbReference>
<name>SECD_RICBR</name>
<keyword id="KW-0997">Cell inner membrane</keyword>
<keyword id="KW-1003">Cell membrane</keyword>
<keyword id="KW-0472">Membrane</keyword>
<keyword id="KW-0653">Protein transport</keyword>
<keyword id="KW-0811">Translocation</keyword>
<keyword id="KW-0812">Transmembrane</keyword>
<keyword id="KW-1133">Transmembrane helix</keyword>
<keyword id="KW-0813">Transport</keyword>
<protein>
    <recommendedName>
        <fullName evidence="1">Protein translocase subunit SecD</fullName>
    </recommendedName>
</protein>
<gene>
    <name evidence="1" type="primary">secD</name>
    <name type="ordered locus">RBE_0700</name>
</gene>
<comment type="function">
    <text evidence="1">Part of the Sec protein translocase complex. Interacts with the SecYEG preprotein conducting channel. SecDF uses the proton motive force (PMF) to complete protein translocation after the ATP-dependent function of SecA.</text>
</comment>
<comment type="subunit">
    <text evidence="1">Forms a complex with SecF. Part of the essential Sec protein translocation apparatus which comprises SecA, SecYEG and auxiliary proteins SecDF-YajC and YidC.</text>
</comment>
<comment type="subcellular location">
    <subcellularLocation>
        <location evidence="1">Cell inner membrane</location>
        <topology evidence="1">Multi-pass membrane protein</topology>
    </subcellularLocation>
</comment>
<comment type="similarity">
    <text evidence="1">Belongs to the SecD/SecF family. SecD subfamily.</text>
</comment>
<reference key="1">
    <citation type="journal article" date="2006" name="PLoS Genet.">
        <title>Genome sequence of Rickettsia bellii illuminates the role of amoebae in gene exchanges between intracellular pathogens.</title>
        <authorList>
            <person name="Ogata H."/>
            <person name="La Scola B."/>
            <person name="Audic S."/>
            <person name="Renesto P."/>
            <person name="Blanc G."/>
            <person name="Robert C."/>
            <person name="Fournier P.-E."/>
            <person name="Claverie J.-M."/>
            <person name="Raoult D."/>
        </authorList>
    </citation>
    <scope>NUCLEOTIDE SEQUENCE [LARGE SCALE GENOMIC DNA]</scope>
    <source>
        <strain>RML369-C</strain>
    </source>
</reference>
<evidence type="ECO:0000255" key="1">
    <source>
        <dbReference type="HAMAP-Rule" id="MF_01463"/>
    </source>
</evidence>